<dbReference type="EMBL" id="EF380351">
    <property type="protein sequence ID" value="ABQ45237.1"/>
    <property type="molecule type" value="Genomic_DNA"/>
</dbReference>
<dbReference type="RefSeq" id="YP_001294172.1">
    <property type="nucleotide sequence ID" value="NC_009599.1"/>
</dbReference>
<dbReference type="SMR" id="A6MM24"/>
<dbReference type="GeneID" id="5236948"/>
<dbReference type="GO" id="GO:0009535">
    <property type="term" value="C:chloroplast thylakoid membrane"/>
    <property type="evidence" value="ECO:0007669"/>
    <property type="project" value="UniProtKB-SubCell"/>
</dbReference>
<dbReference type="GO" id="GO:0005886">
    <property type="term" value="C:plasma membrane"/>
    <property type="evidence" value="ECO:0007669"/>
    <property type="project" value="UniProtKB-UniRule"/>
</dbReference>
<dbReference type="GO" id="GO:0045259">
    <property type="term" value="C:proton-transporting ATP synthase complex"/>
    <property type="evidence" value="ECO:0007669"/>
    <property type="project" value="UniProtKB-KW"/>
</dbReference>
<dbReference type="GO" id="GO:0046933">
    <property type="term" value="F:proton-transporting ATP synthase activity, rotational mechanism"/>
    <property type="evidence" value="ECO:0007669"/>
    <property type="project" value="UniProtKB-UniRule"/>
</dbReference>
<dbReference type="CDD" id="cd00310">
    <property type="entry name" value="ATP-synt_Fo_a_6"/>
    <property type="match status" value="1"/>
</dbReference>
<dbReference type="FunFam" id="1.20.120.220:FF:000001">
    <property type="entry name" value="ATP synthase subunit a, chloroplastic"/>
    <property type="match status" value="1"/>
</dbReference>
<dbReference type="Gene3D" id="1.20.120.220">
    <property type="entry name" value="ATP synthase, F0 complex, subunit A"/>
    <property type="match status" value="1"/>
</dbReference>
<dbReference type="HAMAP" id="MF_01393">
    <property type="entry name" value="ATP_synth_a_bact"/>
    <property type="match status" value="1"/>
</dbReference>
<dbReference type="InterPro" id="IPR045082">
    <property type="entry name" value="ATP_syn_F0_a_bact/chloroplast"/>
</dbReference>
<dbReference type="InterPro" id="IPR000568">
    <property type="entry name" value="ATP_synth_F0_asu"/>
</dbReference>
<dbReference type="InterPro" id="IPR023011">
    <property type="entry name" value="ATP_synth_F0_asu_AS"/>
</dbReference>
<dbReference type="InterPro" id="IPR035908">
    <property type="entry name" value="F0_ATP_A_sf"/>
</dbReference>
<dbReference type="NCBIfam" id="TIGR01131">
    <property type="entry name" value="ATP_synt_6_or_A"/>
    <property type="match status" value="1"/>
</dbReference>
<dbReference type="PANTHER" id="PTHR42823">
    <property type="entry name" value="ATP SYNTHASE SUBUNIT A, CHLOROPLASTIC"/>
    <property type="match status" value="1"/>
</dbReference>
<dbReference type="PANTHER" id="PTHR42823:SF3">
    <property type="entry name" value="ATP SYNTHASE SUBUNIT A, CHLOROPLASTIC"/>
    <property type="match status" value="1"/>
</dbReference>
<dbReference type="Pfam" id="PF00119">
    <property type="entry name" value="ATP-synt_A"/>
    <property type="match status" value="1"/>
</dbReference>
<dbReference type="PRINTS" id="PR00123">
    <property type="entry name" value="ATPASEA"/>
</dbReference>
<dbReference type="SUPFAM" id="SSF81336">
    <property type="entry name" value="F1F0 ATP synthase subunit A"/>
    <property type="match status" value="1"/>
</dbReference>
<dbReference type="PROSITE" id="PS00449">
    <property type="entry name" value="ATPASE_A"/>
    <property type="match status" value="1"/>
</dbReference>
<proteinExistence type="inferred from homology"/>
<feature type="chain" id="PRO_0000362533" description="ATP synthase subunit a, chloroplastic">
    <location>
        <begin position="1"/>
        <end position="247"/>
    </location>
</feature>
<feature type="transmembrane region" description="Helical" evidence="1">
    <location>
        <begin position="38"/>
        <end position="58"/>
    </location>
</feature>
<feature type="transmembrane region" description="Helical" evidence="1">
    <location>
        <begin position="95"/>
        <end position="115"/>
    </location>
</feature>
<feature type="transmembrane region" description="Helical" evidence="1">
    <location>
        <begin position="134"/>
        <end position="154"/>
    </location>
</feature>
<feature type="transmembrane region" description="Helical" evidence="1">
    <location>
        <begin position="199"/>
        <end position="219"/>
    </location>
</feature>
<feature type="transmembrane region" description="Helical" evidence="1">
    <location>
        <begin position="220"/>
        <end position="240"/>
    </location>
</feature>
<sequence>MSVLPCSINTLKVLYDISGVEVGQHFYWQIGGFQVHAQVLITSWVVIAILLGSATIAVRNPQTIPTDGQNFFEYVLEFIRDLSKTQIGEEYGPWVPFIGTMFLFIFVSNWSGALLPWKIIQLPHGELAAPTNDINTTVALALLTSVAYFYAGLTKKGLGYFGKYIQPTPILLPINILEDFTKPLSLSFRLFGNILADELVVVVLVSLVPSVVPIPVMFLGLFTSGIQALIFATLAAAYIGESMEGHH</sequence>
<reference key="1">
    <citation type="journal article" date="2007" name="Mol. Phylogenet. Evol.">
        <title>Phylogenetic and evolutionary implications of complete chloroplast genome sequences of four early-diverging angiosperms: Buxus (Buxaceae), Chloranthus (Chloranthaceae), Dioscorea (Dioscoreaceae), and Illicium (Schisandraceae).</title>
        <authorList>
            <person name="Hansen D.R."/>
            <person name="Dastidar S.G."/>
            <person name="Cai Z."/>
            <person name="Penaflor C."/>
            <person name="Kuehl J.V."/>
            <person name="Boore J.L."/>
            <person name="Jansen R.K."/>
        </authorList>
    </citation>
    <scope>NUCLEOTIDE SEQUENCE [LARGE SCALE GENOMIC DNA]</scope>
</reference>
<keyword id="KW-0066">ATP synthesis</keyword>
<keyword id="KW-0138">CF(0)</keyword>
<keyword id="KW-0150">Chloroplast</keyword>
<keyword id="KW-0375">Hydrogen ion transport</keyword>
<keyword id="KW-0406">Ion transport</keyword>
<keyword id="KW-0472">Membrane</keyword>
<keyword id="KW-0934">Plastid</keyword>
<keyword id="KW-0793">Thylakoid</keyword>
<keyword id="KW-0812">Transmembrane</keyword>
<keyword id="KW-1133">Transmembrane helix</keyword>
<keyword id="KW-0813">Transport</keyword>
<geneLocation type="chloroplast"/>
<gene>
    <name evidence="1" type="primary">atpI</name>
</gene>
<comment type="function">
    <text evidence="1">Key component of the proton channel; it plays a direct role in the translocation of protons across the membrane.</text>
</comment>
<comment type="subunit">
    <text evidence="1">F-type ATPases have 2 components, CF(1) - the catalytic core - and CF(0) - the membrane proton channel. CF(1) has five subunits: alpha(3), beta(3), gamma(1), delta(1), epsilon(1). CF(0) has four main subunits: a, b, b' and c.</text>
</comment>
<comment type="subcellular location">
    <subcellularLocation>
        <location evidence="1">Plastid</location>
        <location evidence="1">Chloroplast thylakoid membrane</location>
        <topology evidence="1">Multi-pass membrane protein</topology>
    </subcellularLocation>
</comment>
<comment type="similarity">
    <text evidence="1">Belongs to the ATPase A chain family.</text>
</comment>
<name>ATPI_BUXMI</name>
<organism>
    <name type="scientific">Buxus microphylla</name>
    <name type="common">Littleleaf boxwood</name>
    <name type="synonym">Japanese boxwood</name>
    <dbReference type="NCBI Taxonomy" id="153571"/>
    <lineage>
        <taxon>Eukaryota</taxon>
        <taxon>Viridiplantae</taxon>
        <taxon>Streptophyta</taxon>
        <taxon>Embryophyta</taxon>
        <taxon>Tracheophyta</taxon>
        <taxon>Spermatophyta</taxon>
        <taxon>Magnoliopsida</taxon>
        <taxon>Buxales</taxon>
        <taxon>Buxaceae</taxon>
        <taxon>Buxus</taxon>
    </lineage>
</organism>
<evidence type="ECO:0000255" key="1">
    <source>
        <dbReference type="HAMAP-Rule" id="MF_01393"/>
    </source>
</evidence>
<accession>A6MM24</accession>
<protein>
    <recommendedName>
        <fullName evidence="1">ATP synthase subunit a, chloroplastic</fullName>
    </recommendedName>
    <alternativeName>
        <fullName evidence="1">ATP synthase F0 sector subunit a</fullName>
    </alternativeName>
    <alternativeName>
        <fullName evidence="1">F-ATPase subunit IV</fullName>
    </alternativeName>
</protein>